<accession>Q91FS2</accession>
<name>250L_IIV6</name>
<feature type="chain" id="PRO_0000377832" description="Uncharacterized protein 250L">
    <location>
        <begin position="1"/>
        <end position="141"/>
    </location>
</feature>
<sequence>MNTEKVIFNYRLKFHPKYLDSNFTSYIKNVAKEIIFKKETFYVLKIEDVEILNVIIGRGQSDHIANLKITTQSIVPQENKIFSGIVTNVFPHLKLTIVTIEGKVEVIVKGETTKQINDFALVLINVVKFHNEKIVCSGSFQ</sequence>
<gene>
    <name type="ORF">IIV6-250L</name>
</gene>
<organismHost>
    <name type="scientific">Acheta domesticus</name>
    <name type="common">House cricket</name>
    <dbReference type="NCBI Taxonomy" id="6997"/>
</organismHost>
<organismHost>
    <name type="scientific">Chilo suppressalis</name>
    <name type="common">Asiatic rice borer moth</name>
    <dbReference type="NCBI Taxonomy" id="168631"/>
</organismHost>
<organismHost>
    <name type="scientific">Gryllus bimaculatus</name>
    <name type="common">Two-spotted cricket</name>
    <dbReference type="NCBI Taxonomy" id="6999"/>
</organismHost>
<organismHost>
    <name type="scientific">Gryllus campestris</name>
    <dbReference type="NCBI Taxonomy" id="58607"/>
</organismHost>
<organismHost>
    <name type="scientific">Spodoptera frugiperda</name>
    <name type="common">Fall armyworm</name>
    <dbReference type="NCBI Taxonomy" id="7108"/>
</organismHost>
<organism>
    <name type="scientific">Invertebrate iridescent virus 6</name>
    <name type="common">IIV-6</name>
    <name type="synonym">Chilo iridescent virus</name>
    <dbReference type="NCBI Taxonomy" id="176652"/>
    <lineage>
        <taxon>Viruses</taxon>
        <taxon>Varidnaviria</taxon>
        <taxon>Bamfordvirae</taxon>
        <taxon>Nucleocytoviricota</taxon>
        <taxon>Megaviricetes</taxon>
        <taxon>Pimascovirales</taxon>
        <taxon>Iridoviridae</taxon>
        <taxon>Betairidovirinae</taxon>
        <taxon>Iridovirus</taxon>
    </lineage>
</organism>
<keyword id="KW-1185">Reference proteome</keyword>
<protein>
    <recommendedName>
        <fullName>Uncharacterized protein 250L</fullName>
    </recommendedName>
</protein>
<proteinExistence type="predicted"/>
<dbReference type="EMBL" id="AF303741">
    <property type="protein sequence ID" value="AAK82111.1"/>
    <property type="molecule type" value="Genomic_DNA"/>
</dbReference>
<dbReference type="RefSeq" id="NP_149713.1">
    <property type="nucleotide sequence ID" value="NC_003038.1"/>
</dbReference>
<dbReference type="KEGG" id="vg:1732984"/>
<dbReference type="Proteomes" id="UP000001359">
    <property type="component" value="Genome"/>
</dbReference>
<reference key="1">
    <citation type="journal article" date="2001" name="Virology">
        <title>Analysis of the first complete DNA sequence of an invertebrate iridovirus: coding strategy of the genome of Chilo iridescent virus.</title>
        <authorList>
            <person name="Jakob N.J."/>
            <person name="Mueller K."/>
            <person name="Bahr U."/>
            <person name="Darai G."/>
        </authorList>
    </citation>
    <scope>NUCLEOTIDE SEQUENCE [LARGE SCALE GENOMIC DNA]</scope>
</reference>
<reference key="2">
    <citation type="journal article" date="2007" name="Virol. J.">
        <title>Comparative genomic analysis of the family Iridoviridae: re-annotating and defining the core set of iridovirus genes.</title>
        <authorList>
            <person name="Eaton H.E."/>
            <person name="Metcalf J."/>
            <person name="Penny E."/>
            <person name="Tcherepanov V."/>
            <person name="Upton C."/>
            <person name="Brunetti C.R."/>
        </authorList>
    </citation>
    <scope>GENOME REANNOTATION</scope>
</reference>